<name>MUTS_ANADE</name>
<organism>
    <name type="scientific">Anaeromyxobacter dehalogenans (strain 2CP-C)</name>
    <dbReference type="NCBI Taxonomy" id="290397"/>
    <lineage>
        <taxon>Bacteria</taxon>
        <taxon>Pseudomonadati</taxon>
        <taxon>Myxococcota</taxon>
        <taxon>Myxococcia</taxon>
        <taxon>Myxococcales</taxon>
        <taxon>Cystobacterineae</taxon>
        <taxon>Anaeromyxobacteraceae</taxon>
        <taxon>Anaeromyxobacter</taxon>
    </lineage>
</organism>
<protein>
    <recommendedName>
        <fullName evidence="1">DNA mismatch repair protein MutS</fullName>
    </recommendedName>
</protein>
<gene>
    <name evidence="1" type="primary">mutS</name>
    <name type="ordered locus">Adeh_1698</name>
</gene>
<comment type="function">
    <text evidence="1">This protein is involved in the repair of mismatches in DNA. It is possible that it carries out the mismatch recognition step. This protein has a weak ATPase activity.</text>
</comment>
<comment type="similarity">
    <text evidence="1">Belongs to the DNA mismatch repair MutS family.</text>
</comment>
<proteinExistence type="inferred from homology"/>
<keyword id="KW-0067">ATP-binding</keyword>
<keyword id="KW-0227">DNA damage</keyword>
<keyword id="KW-0234">DNA repair</keyword>
<keyword id="KW-0238">DNA-binding</keyword>
<keyword id="KW-0547">Nucleotide-binding</keyword>
<keyword id="KW-1185">Reference proteome</keyword>
<sequence>MPEIAQAHTPMMRQYLETKARYPDAILFFRLGDFYEMFFEDALTASEALQITLTARSKGDDKVPMCGVPYHAARGYVARLLEKGFKVAICDQVEEPGKSQLVKREVTRVVTPGMVLDDQVLDPREASWLGAVALEGGRAGLALLDASTGQLQCGEVDGDERLVDELRRAGVRELVFSSAADGARTEAIARAVGAPAARRDAAEFERAEDRLRKHLGVPSLDGFGVSGLPLGLSAAAAALAYLADTQRAAPRHVDRISRLSTDDVLLLDEATRTNLELERTLSGGRKKGTLLALLDRTVTAPGGRRLAEWLRYPLADLARIGARLDAVEELSGASVAREELAGALRPVADLERLLSRLVLGQGNARDLRALAGALLALPALADVLEARGAALLREAGGRLRGLEALAAHLDAAVAEEPPATLREGGFIRRGHSAELDEIVAISEDGKGWIAGLEAKERERTGIGSLKVRFNKVFGYYLEVTKPNLHLVPKDWERRQTTVGGERFVTPELKGFEEKVLTAEERRAALEERLFEALRQAVAAEAPRVRTAADAVATADALLSLARVAAERGYVRPEVDASEALEIVDGRHPVVEAVLPDGPAAYVPNDVLVASRGAPECAEHGALLVITGPNMAGKSTVMRQAALVVLLAQMGAFVPARRARIGLVDRIFTRVGASDDLARGRSTFMVEMTETAAILHNATRRSLVVLDEIGRGTSTFDGVSIAWAVAEHLHDVTGCRTLFATHYHELQDLARERPAVRNLTVAVREVGDRVVFLRKLVQGGASRSYGIEVAKLAGLPAEVLARAREILKNLEAMEVDEGGHPALARGRRRRAGPAAAQLGLFGGGAAADPAADEVAKAIRALDLDALRPLDALNLLAGWKRSLE</sequence>
<feature type="chain" id="PRO_0000335111" description="DNA mismatch repair protein MutS">
    <location>
        <begin position="1"/>
        <end position="882"/>
    </location>
</feature>
<feature type="binding site" evidence="1">
    <location>
        <begin position="627"/>
        <end position="634"/>
    </location>
    <ligand>
        <name>ATP</name>
        <dbReference type="ChEBI" id="CHEBI:30616"/>
    </ligand>
</feature>
<evidence type="ECO:0000255" key="1">
    <source>
        <dbReference type="HAMAP-Rule" id="MF_00096"/>
    </source>
</evidence>
<dbReference type="EMBL" id="CP000251">
    <property type="protein sequence ID" value="ABC81471.1"/>
    <property type="molecule type" value="Genomic_DNA"/>
</dbReference>
<dbReference type="RefSeq" id="WP_011420754.1">
    <property type="nucleotide sequence ID" value="NC_007760.1"/>
</dbReference>
<dbReference type="SMR" id="Q2IIJ3"/>
<dbReference type="STRING" id="290397.Adeh_1698"/>
<dbReference type="KEGG" id="ade:Adeh_1698"/>
<dbReference type="eggNOG" id="COG0249">
    <property type="taxonomic scope" value="Bacteria"/>
</dbReference>
<dbReference type="HOGENOM" id="CLU_002472_3_1_7"/>
<dbReference type="OrthoDB" id="9802448at2"/>
<dbReference type="Proteomes" id="UP000001935">
    <property type="component" value="Chromosome"/>
</dbReference>
<dbReference type="GO" id="GO:0005829">
    <property type="term" value="C:cytosol"/>
    <property type="evidence" value="ECO:0007669"/>
    <property type="project" value="TreeGrafter"/>
</dbReference>
<dbReference type="GO" id="GO:0005524">
    <property type="term" value="F:ATP binding"/>
    <property type="evidence" value="ECO:0007669"/>
    <property type="project" value="UniProtKB-UniRule"/>
</dbReference>
<dbReference type="GO" id="GO:0140664">
    <property type="term" value="F:ATP-dependent DNA damage sensor activity"/>
    <property type="evidence" value="ECO:0007669"/>
    <property type="project" value="InterPro"/>
</dbReference>
<dbReference type="GO" id="GO:0003684">
    <property type="term" value="F:damaged DNA binding"/>
    <property type="evidence" value="ECO:0007669"/>
    <property type="project" value="UniProtKB-UniRule"/>
</dbReference>
<dbReference type="GO" id="GO:0030983">
    <property type="term" value="F:mismatched DNA binding"/>
    <property type="evidence" value="ECO:0007669"/>
    <property type="project" value="InterPro"/>
</dbReference>
<dbReference type="GO" id="GO:0006298">
    <property type="term" value="P:mismatch repair"/>
    <property type="evidence" value="ECO:0007669"/>
    <property type="project" value="UniProtKB-UniRule"/>
</dbReference>
<dbReference type="CDD" id="cd03284">
    <property type="entry name" value="ABC_MutS1"/>
    <property type="match status" value="1"/>
</dbReference>
<dbReference type="FunFam" id="3.40.1170.10:FF:000001">
    <property type="entry name" value="DNA mismatch repair protein MutS"/>
    <property type="match status" value="1"/>
</dbReference>
<dbReference type="FunFam" id="3.40.50.300:FF:000870">
    <property type="entry name" value="MutS protein homolog 4"/>
    <property type="match status" value="1"/>
</dbReference>
<dbReference type="Gene3D" id="1.10.1420.10">
    <property type="match status" value="2"/>
</dbReference>
<dbReference type="Gene3D" id="3.40.1170.10">
    <property type="entry name" value="DNA repair protein MutS, domain I"/>
    <property type="match status" value="1"/>
</dbReference>
<dbReference type="Gene3D" id="3.30.420.110">
    <property type="entry name" value="MutS, connector domain"/>
    <property type="match status" value="1"/>
</dbReference>
<dbReference type="Gene3D" id="3.40.50.300">
    <property type="entry name" value="P-loop containing nucleotide triphosphate hydrolases"/>
    <property type="match status" value="1"/>
</dbReference>
<dbReference type="HAMAP" id="MF_00096">
    <property type="entry name" value="MutS"/>
    <property type="match status" value="1"/>
</dbReference>
<dbReference type="InterPro" id="IPR005748">
    <property type="entry name" value="DNA_mismatch_repair_MutS"/>
</dbReference>
<dbReference type="InterPro" id="IPR007695">
    <property type="entry name" value="DNA_mismatch_repair_MutS-lik_N"/>
</dbReference>
<dbReference type="InterPro" id="IPR017261">
    <property type="entry name" value="DNA_mismatch_repair_MutS/MSH"/>
</dbReference>
<dbReference type="InterPro" id="IPR000432">
    <property type="entry name" value="DNA_mismatch_repair_MutS_C"/>
</dbReference>
<dbReference type="InterPro" id="IPR007861">
    <property type="entry name" value="DNA_mismatch_repair_MutS_clamp"/>
</dbReference>
<dbReference type="InterPro" id="IPR007696">
    <property type="entry name" value="DNA_mismatch_repair_MutS_core"/>
</dbReference>
<dbReference type="InterPro" id="IPR016151">
    <property type="entry name" value="DNA_mismatch_repair_MutS_N"/>
</dbReference>
<dbReference type="InterPro" id="IPR036187">
    <property type="entry name" value="DNA_mismatch_repair_MutS_sf"/>
</dbReference>
<dbReference type="InterPro" id="IPR007860">
    <property type="entry name" value="DNA_mmatch_repair_MutS_con_dom"/>
</dbReference>
<dbReference type="InterPro" id="IPR045076">
    <property type="entry name" value="MutS"/>
</dbReference>
<dbReference type="InterPro" id="IPR036678">
    <property type="entry name" value="MutS_con_dom_sf"/>
</dbReference>
<dbReference type="InterPro" id="IPR027417">
    <property type="entry name" value="P-loop_NTPase"/>
</dbReference>
<dbReference type="NCBIfam" id="TIGR01070">
    <property type="entry name" value="mutS1"/>
    <property type="match status" value="1"/>
</dbReference>
<dbReference type="NCBIfam" id="NF003810">
    <property type="entry name" value="PRK05399.1"/>
    <property type="match status" value="1"/>
</dbReference>
<dbReference type="PANTHER" id="PTHR11361:SF34">
    <property type="entry name" value="DNA MISMATCH REPAIR PROTEIN MSH1, MITOCHONDRIAL"/>
    <property type="match status" value="1"/>
</dbReference>
<dbReference type="PANTHER" id="PTHR11361">
    <property type="entry name" value="DNA MISMATCH REPAIR PROTEIN MUTS FAMILY MEMBER"/>
    <property type="match status" value="1"/>
</dbReference>
<dbReference type="Pfam" id="PF01624">
    <property type="entry name" value="MutS_I"/>
    <property type="match status" value="1"/>
</dbReference>
<dbReference type="Pfam" id="PF05188">
    <property type="entry name" value="MutS_II"/>
    <property type="match status" value="1"/>
</dbReference>
<dbReference type="Pfam" id="PF05192">
    <property type="entry name" value="MutS_III"/>
    <property type="match status" value="1"/>
</dbReference>
<dbReference type="Pfam" id="PF05190">
    <property type="entry name" value="MutS_IV"/>
    <property type="match status" value="1"/>
</dbReference>
<dbReference type="Pfam" id="PF00488">
    <property type="entry name" value="MutS_V"/>
    <property type="match status" value="1"/>
</dbReference>
<dbReference type="PIRSF" id="PIRSF037677">
    <property type="entry name" value="DNA_mis_repair_Msh6"/>
    <property type="match status" value="1"/>
</dbReference>
<dbReference type="SMART" id="SM00534">
    <property type="entry name" value="MUTSac"/>
    <property type="match status" value="1"/>
</dbReference>
<dbReference type="SMART" id="SM00533">
    <property type="entry name" value="MUTSd"/>
    <property type="match status" value="1"/>
</dbReference>
<dbReference type="SUPFAM" id="SSF55271">
    <property type="entry name" value="DNA repair protein MutS, domain I"/>
    <property type="match status" value="1"/>
</dbReference>
<dbReference type="SUPFAM" id="SSF53150">
    <property type="entry name" value="DNA repair protein MutS, domain II"/>
    <property type="match status" value="1"/>
</dbReference>
<dbReference type="SUPFAM" id="SSF48334">
    <property type="entry name" value="DNA repair protein MutS, domain III"/>
    <property type="match status" value="1"/>
</dbReference>
<dbReference type="SUPFAM" id="SSF52540">
    <property type="entry name" value="P-loop containing nucleoside triphosphate hydrolases"/>
    <property type="match status" value="1"/>
</dbReference>
<dbReference type="PROSITE" id="PS00486">
    <property type="entry name" value="DNA_MISMATCH_REPAIR_2"/>
    <property type="match status" value="1"/>
</dbReference>
<reference key="1">
    <citation type="submission" date="2006-01" db="EMBL/GenBank/DDBJ databases">
        <title>Complete sequence of Anaeromyxobacter dehalogenans 2CP-C.</title>
        <authorList>
            <person name="Copeland A."/>
            <person name="Lucas S."/>
            <person name="Lapidus A."/>
            <person name="Barry K."/>
            <person name="Detter J.C."/>
            <person name="Glavina T."/>
            <person name="Hammon N."/>
            <person name="Israni S."/>
            <person name="Pitluck S."/>
            <person name="Brettin T."/>
            <person name="Bruce D."/>
            <person name="Han C."/>
            <person name="Tapia R."/>
            <person name="Gilna P."/>
            <person name="Kiss H."/>
            <person name="Schmutz J."/>
            <person name="Larimer F."/>
            <person name="Land M."/>
            <person name="Kyrpides N."/>
            <person name="Anderson I."/>
            <person name="Sanford R.A."/>
            <person name="Ritalahti K.M."/>
            <person name="Thomas H.S."/>
            <person name="Kirby J.R."/>
            <person name="Zhulin I.B."/>
            <person name="Loeffler F.E."/>
            <person name="Richardson P."/>
        </authorList>
    </citation>
    <scope>NUCLEOTIDE SEQUENCE [LARGE SCALE GENOMIC DNA]</scope>
    <source>
        <strain>2CP-C</strain>
    </source>
</reference>
<accession>Q2IIJ3</accession>